<keyword id="KW-0002">3D-structure</keyword>
<keyword id="KW-0007">Acetylation</keyword>
<keyword id="KW-0025">Alternative splicing</keyword>
<keyword id="KW-0053">Apoptosis</keyword>
<keyword id="KW-0963">Cytoplasm</keyword>
<keyword id="KW-0945">Host-virus interaction</keyword>
<keyword id="KW-1017">Isopeptide bond</keyword>
<keyword id="KW-0472">Membrane</keyword>
<keyword id="KW-0496">Mitochondrion</keyword>
<keyword id="KW-1000">Mitochondrion outer membrane</keyword>
<keyword id="KW-0539">Nucleus</keyword>
<keyword id="KW-1185">Reference proteome</keyword>
<keyword id="KW-0812">Transmembrane</keyword>
<keyword id="KW-1133">Transmembrane helix</keyword>
<keyword id="KW-0832">Ubl conjugation</keyword>
<sequence>MDGSGEQLGSGGPTSSEQIMKTGAFLLQGFIQDRAGRMAGETPELTLEQPPQDASTKKLSECLRRIGDELDSNMELQRMIADVDTDSPREVFFRVAADMFADGNFNWGRVVALFYFASKLVLKALCTKVPELIRTIMGWTLDFLRERLLVWIQDQGGWEGLLSYFGTPTWQTVTIFVAGVLTASLTIWKKMG</sequence>
<reference key="1">
    <citation type="journal article" date="1993" name="Cell">
        <title>Bcl-2 heterodimerizes in vivo with a conserved homolog, Bax, that accelerates programmed cell death.</title>
        <authorList>
            <person name="Oltvai Z.N."/>
            <person name="Milliman C.L."/>
            <person name="Korsmeyer S.J."/>
        </authorList>
    </citation>
    <scope>NUCLEOTIDE SEQUENCE [MRNA]</scope>
    <scope>INTERACTION WITH BCL2</scope>
    <scope>FUNCTION</scope>
    <source>
        <strain>C57BL/6 X DBA/2</strain>
    </source>
</reference>
<reference key="2">
    <citation type="journal article" date="2004" name="Genome Res.">
        <title>The status, quality, and expansion of the NIH full-length cDNA project: the Mammalian Gene Collection (MGC).</title>
        <authorList>
            <consortium name="The MGC Project Team"/>
        </authorList>
    </citation>
    <scope>NUCLEOTIDE SEQUENCE [LARGE SCALE MRNA]</scope>
    <source>
        <strain>FVB/N-3</strain>
        <tissue>Mammary tumor</tissue>
    </source>
</reference>
<reference key="3">
    <citation type="journal article" date="2004" name="Mol. Cell">
        <title>Inhibition of both the extrinsic and intrinsic death pathways through nonhomotypic death-fold interactions.</title>
        <authorList>
            <person name="Nam Y.J."/>
            <person name="Mani K."/>
            <person name="Ashton A.W."/>
            <person name="Peng C.F."/>
            <person name="Krishnamurthy B."/>
            <person name="Hayakawa Y."/>
            <person name="Lee P."/>
            <person name="Korsmeyer S.J."/>
            <person name="Kitsis R.N."/>
        </authorList>
    </citation>
    <scope>INTERACTION WITH NOL3</scope>
</reference>
<reference key="4">
    <citation type="journal article" date="2006" name="PLoS Biol.">
        <title>IAN family critically regulates survival and development of T lymphocytes.</title>
        <authorList>
            <person name="Nitta T."/>
            <person name="Nasreen M."/>
            <person name="Seike T."/>
            <person name="Goji A."/>
            <person name="Ohigashi I."/>
            <person name="Miyazaki T."/>
            <person name="Ohta T."/>
            <person name="Kanno M."/>
            <person name="Takahama Y."/>
        </authorList>
    </citation>
    <scope>INTERACTION WITH GIMAP3 AND GIMAP5</scope>
</reference>
<reference key="5">
    <citation type="journal article" date="2010" name="Cell">
        <title>A tissue-specific atlas of mouse protein phosphorylation and expression.</title>
        <authorList>
            <person name="Huttlin E.L."/>
            <person name="Jedrychowski M.P."/>
            <person name="Elias J.E."/>
            <person name="Goswami T."/>
            <person name="Rad R."/>
            <person name="Beausoleil S.A."/>
            <person name="Villen J."/>
            <person name="Haas W."/>
            <person name="Sowa M.E."/>
            <person name="Gygi S.P."/>
        </authorList>
    </citation>
    <scope>IDENTIFICATION BY MASS SPECTROMETRY [LARGE SCALE ANALYSIS]</scope>
    <source>
        <tissue>Brain</tissue>
        <tissue>Brown adipose tissue</tissue>
        <tissue>Heart</tissue>
        <tissue>Kidney</tissue>
        <tissue>Liver</tissue>
        <tissue>Lung</tissue>
        <tissue>Pancreas</tissue>
        <tissue>Spleen</tissue>
        <tissue>Testis</tissue>
    </source>
</reference>
<reference key="6">
    <citation type="journal article" date="2008" name="PLoS Pathog.">
        <title>Structural and biochemical bases for the inhibition of autophagy and apoptosis by viral BCL-2 of murine gamma-herpesvirus 68.</title>
        <authorList>
            <person name="Ku B."/>
            <person name="Woo J.S."/>
            <person name="Liang C."/>
            <person name="Lee K.H."/>
            <person name="Hong H.S."/>
            <person name="E X."/>
            <person name="Kim K.S."/>
            <person name="Jung J.U."/>
            <person name="Oh B.H."/>
        </authorList>
    </citation>
    <scope>INTERACTION WITH MURINE GAMMAHERPESVIRUS 68 PROTEIN VBCL2</scope>
</reference>
<reference key="7">
    <citation type="journal article" date="2011" name="Cell Res.">
        <title>Evidence that inhibition of BAX activation by BCL-2 involves its tight and preferential interaction with the BH3 domain of BAX.</title>
        <authorList>
            <person name="Ku B."/>
            <person name="Liang C."/>
            <person name="Jung J.U."/>
            <person name="Oh B.H."/>
        </authorList>
    </citation>
    <scope>X-RAY CRYSTALLOGRAPHY (2.7 ANGSTROMS) OF 52-82 IN COMPLEX WITH BCL2</scope>
    <scope>FUNCTION</scope>
    <scope>INTERACTION WITH BCL2 AND BCL2L2</scope>
</reference>
<name>BAX_MOUSE</name>
<organism>
    <name type="scientific">Mus musculus</name>
    <name type="common">Mouse</name>
    <dbReference type="NCBI Taxonomy" id="10090"/>
    <lineage>
        <taxon>Eukaryota</taxon>
        <taxon>Metazoa</taxon>
        <taxon>Chordata</taxon>
        <taxon>Craniata</taxon>
        <taxon>Vertebrata</taxon>
        <taxon>Euteleostomi</taxon>
        <taxon>Mammalia</taxon>
        <taxon>Eutheria</taxon>
        <taxon>Euarchontoglires</taxon>
        <taxon>Glires</taxon>
        <taxon>Rodentia</taxon>
        <taxon>Myomorpha</taxon>
        <taxon>Muroidea</taxon>
        <taxon>Muridae</taxon>
        <taxon>Murinae</taxon>
        <taxon>Mus</taxon>
        <taxon>Mus</taxon>
    </lineage>
</organism>
<accession>Q07813</accession>
<protein>
    <recommendedName>
        <fullName>Apoptosis regulator BAX</fullName>
    </recommendedName>
</protein>
<comment type="function">
    <text evidence="7 8">Accelerates programmed cell death by binding to, and antagonizing the apoptosis repressor BCL2 or its adenovirus homolog E1B 19k protein. Under stress conditions, undergoes a conformation change that causes translocation to the mitochondrion membrane, leading to the release of cytochrome c that then triggers apoptosis. Promotes activation of CASP3, and thereby apoptosis. BAX deficiency leads to lymphoid hyperplasia and male sterility, because of the cessation of sperm production.</text>
</comment>
<comment type="subunit">
    <text evidence="2 4 5 7 8">Homodimer. Forms higher oligomers under stress conditions. Forms heterooligomers with BAK (By similarity). Interacts with BCL2L11. Interaction with BCL2L11 promotes BAX oligomerization and association with mitochondrial membranes, with subsequent release of cytochrome c (PubMed:21060336). Forms heterodimers with BCL2 (PubMed:21060336, PubMed:8358790). Forms heterodimers with BCL2L1 isoform Bcl-X(L), BCL2L2, MCL1 and A1. Interacts with SH3GLB1. Interacts with SFN and YWHAZ; the interaction occurs in the cytoplasm. Under stress conditions, JNK-mediated phosphorylation of SFN and YWHAZ, releases BAX to mitochondria. Interacts with RNF144B, which regulates the ubiquitin-dependent stability of BAX. Interacts with CLU under stress conditions that cause a conformation change leading to BAX oligomerization and association with mitochondria. Does not interact with CLU in unstressed cells (By similarity). Interacts with FAIM2/LFG2 (By similarity). Interacts with BOP (By similarity). Interacts (via a C-terminal 33 residues) with NOL3 (via CARD domain); inhibits BAX activation and translocationand consequently cytochrome c release from mitochondria (PubMed:15383280). Interacts with GIMAP3/IAN4 and GIMAP5/IAN5; this interaction is increased, when cells initiate apoptosis upon IL2 withdrawal (PubMed:16509771). Interacts with IRF3; the interaction is direct and, upon virus infection, mediates the formation of the apoptosis complex TOMM70:HSP90AA1:IRF3:BAX (By similarity). Interacts with MOAP1, facilitating BAX-dependent mitochondrial outer membrane permeabilization and apoptosis (By similarity). Interacts with BCL2L10/BCL-B (By similarity). Interacts with non-acetylated XRCC6/Ku70; this interaction leads to BAX sequestration in the cytosol, away from the mitochondria, preventing BAX-mediated apoptosis (By similarity).</text>
</comment>
<comment type="subunit">
    <text evidence="6">(Microbial infection) Interacts with gamma-herpesvirus 68 protein vBCL2.</text>
</comment>
<comment type="interaction">
    <interactant intactId="EBI-700711">
        <id>Q07813</id>
    </interactant>
    <interactant intactId="EBI-526314">
        <id>P10417</id>
        <label>Bcl2</label>
    </interactant>
    <organismsDiffer>false</organismsDiffer>
    <experiments>2</experiments>
</comment>
<comment type="interaction">
    <interactant intactId="EBI-700711">
        <id>Q07813</id>
    </interactant>
    <interactant intactId="EBI-371750">
        <id>O75460</id>
        <label>ERN1</label>
    </interactant>
    <organismsDiffer>true</organismsDiffer>
    <experiments>2</experiments>
</comment>
<comment type="interaction">
    <interactant intactId="EBI-15666406">
        <id>Q07813-1</id>
    </interactant>
    <interactant intactId="EBI-15666406">
        <id>Q07813-1</id>
        <label>Bax</label>
    </interactant>
    <organismsDiffer>false</organismsDiffer>
    <experiments>2</experiments>
</comment>
<comment type="interaction">
    <interactant intactId="EBI-15666406">
        <id>Q07813-1</id>
    </interactant>
    <interactant intactId="EBI-526406">
        <id>O43521</id>
        <label>BCL2L11</label>
    </interactant>
    <organismsDiffer>true</organismsDiffer>
    <experiments>7</experiments>
</comment>
<comment type="subcellular location">
    <molecule>Isoform Alpha</molecule>
    <subcellularLocation>
        <location evidence="2">Mitochondrion outer membrane</location>
        <topology evidence="3">Single-pass membrane protein</topology>
    </subcellularLocation>
    <subcellularLocation>
        <location evidence="2">Cytoplasm</location>
    </subcellularLocation>
    <subcellularLocation>
        <location evidence="2">Nucleus</location>
    </subcellularLocation>
    <text evidence="2">Colocalizes with 14-3-3 proteins in the cytoplasm. Under stress conditions, undergoes a conformation change that causes release from JNK-phosphorylated 14-3-3 proteins and translocation to the mitochondrion membrane (By similarity).</text>
</comment>
<comment type="subcellular location">
    <molecule>Isoform Beta</molecule>
    <subcellularLocation>
        <location evidence="1">Cytoplasm</location>
    </subcellularLocation>
</comment>
<comment type="subcellular location">
    <molecule>Isoform Gamma</molecule>
    <subcellularLocation>
        <location evidence="1">Cytoplasm</location>
    </subcellularLocation>
</comment>
<comment type="alternative products">
    <event type="alternative splicing"/>
    <isoform>
        <id>Q07813-1</id>
        <name>Alpha</name>
        <sequence type="displayed"/>
    </isoform>
    <isoform>
        <id>Q07813-2</id>
        <name>Beta</name>
        <sequence type="not described"/>
    </isoform>
    <isoform>
        <id>Q07813-3</id>
        <name>Gamma</name>
        <sequence type="not described"/>
    </isoform>
</comment>
<comment type="tissue specificity">
    <text>Expressed in a wide variety of tissues.</text>
</comment>
<comment type="domain">
    <text evidence="2">Intact BH3 motif is required by BIK, BID, BAK, BAD and BAX for their pro-apoptotic activity and for their interaction with anti-apoptotic members of the Bcl-2 family.</text>
</comment>
<comment type="PTM">
    <text evidence="2">Ubiquitinated in the absence of XRCC6/Ku70 (By similarity). Ubiquitinated on Lys-128 and Lys-190. 'Lys-63'-linked polyubiquitin chains on Lys-128 are removed by USP12.</text>
</comment>
<comment type="similarity">
    <text evidence="9">Belongs to the Bcl-2 family.</text>
</comment>
<dbReference type="EMBL" id="L22472">
    <property type="protein sequence ID" value="AAA03622.1"/>
    <property type="molecule type" value="mRNA"/>
</dbReference>
<dbReference type="EMBL" id="BC018228">
    <property type="protein sequence ID" value="AAH18228.1"/>
    <property type="molecule type" value="mRNA"/>
</dbReference>
<dbReference type="EMBL" id="BC053380">
    <property type="protein sequence ID" value="AAH53380.1"/>
    <property type="molecule type" value="mRNA"/>
</dbReference>
<dbReference type="CCDS" id="CCDS21246.1">
    <molecule id="Q07813-1"/>
</dbReference>
<dbReference type="PIR" id="D47538">
    <property type="entry name" value="D47538"/>
</dbReference>
<dbReference type="RefSeq" id="NP_031553.1">
    <molecule id="Q07813-1"/>
    <property type="nucleotide sequence ID" value="NM_007527.4"/>
</dbReference>
<dbReference type="PDB" id="2XA0">
    <property type="method" value="X-ray"/>
    <property type="resolution" value="2.70 A"/>
    <property type="chains" value="C/D=52-82"/>
</dbReference>
<dbReference type="PDB" id="5W62">
    <property type="method" value="X-ray"/>
    <property type="resolution" value="2.20 A"/>
    <property type="chains" value="A=1-192"/>
</dbReference>
<dbReference type="PDBsum" id="2XA0"/>
<dbReference type="PDBsum" id="5W62"/>
<dbReference type="SMR" id="Q07813"/>
<dbReference type="BioGRID" id="198304">
    <property type="interactions" value="25"/>
</dbReference>
<dbReference type="ComplexPortal" id="CPX-2031">
    <property type="entry name" value="BAX oligomer"/>
</dbReference>
<dbReference type="CORUM" id="Q07813"/>
<dbReference type="DIP" id="DIP-29541N"/>
<dbReference type="ELM" id="Q07813"/>
<dbReference type="FunCoup" id="Q07813">
    <property type="interactions" value="1416"/>
</dbReference>
<dbReference type="IntAct" id="Q07813">
    <property type="interactions" value="12"/>
</dbReference>
<dbReference type="MINT" id="Q07813"/>
<dbReference type="STRING" id="10090.ENSMUSP00000033093"/>
<dbReference type="ChEMBL" id="CHEMBL3414407"/>
<dbReference type="GlyGen" id="Q07813">
    <property type="glycosylation" value="2 sites, 1 O-linked glycan (1 site)"/>
</dbReference>
<dbReference type="iPTMnet" id="Q07813"/>
<dbReference type="PhosphoSitePlus" id="Q07813"/>
<dbReference type="SwissPalm" id="Q07813"/>
<dbReference type="jPOST" id="Q07813"/>
<dbReference type="PaxDb" id="10090-ENSMUSP00000033093"/>
<dbReference type="PeptideAtlas" id="Q07813"/>
<dbReference type="ProteomicsDB" id="273541">
    <molecule id="Q07813-1"/>
</dbReference>
<dbReference type="Pumba" id="Q07813"/>
<dbReference type="TopDownProteomics" id="Q07813-1">
    <molecule id="Q07813-1"/>
</dbReference>
<dbReference type="ABCD" id="Q07813">
    <property type="antibodies" value="1 sequenced antibody"/>
</dbReference>
<dbReference type="Antibodypedia" id="3777">
    <property type="antibodies" value="2169 antibodies from 52 providers"/>
</dbReference>
<dbReference type="DNASU" id="12028"/>
<dbReference type="Ensembl" id="ENSMUST00000033093.10">
    <molecule id="Q07813-1"/>
    <property type="protein sequence ID" value="ENSMUSP00000033093.9"/>
    <property type="gene ID" value="ENSMUSG00000003873.12"/>
</dbReference>
<dbReference type="GeneID" id="12028"/>
<dbReference type="KEGG" id="mmu:12028"/>
<dbReference type="UCSC" id="uc009gvh.1">
    <molecule id="Q07813-1"/>
    <property type="organism name" value="mouse"/>
</dbReference>
<dbReference type="AGR" id="MGI:99702"/>
<dbReference type="CTD" id="581"/>
<dbReference type="MGI" id="MGI:99702">
    <property type="gene designation" value="Bax"/>
</dbReference>
<dbReference type="VEuPathDB" id="HostDB:ENSMUSG00000003873"/>
<dbReference type="eggNOG" id="KOG4728">
    <property type="taxonomic scope" value="Eukaryota"/>
</dbReference>
<dbReference type="GeneTree" id="ENSGT01130000278292"/>
<dbReference type="HOGENOM" id="CLU_085401_2_2_1"/>
<dbReference type="InParanoid" id="Q07813"/>
<dbReference type="OMA" id="QCCGDSE"/>
<dbReference type="OrthoDB" id="6080198at2759"/>
<dbReference type="PhylomeDB" id="Q07813"/>
<dbReference type="TreeFam" id="TF315834"/>
<dbReference type="Reactome" id="R-MMU-111457">
    <property type="pathway name" value="Release of apoptotic factors from the mitochondria"/>
</dbReference>
<dbReference type="Reactome" id="R-MMU-114294">
    <property type="pathway name" value="Activation, translocation and oligomerization of BAX"/>
</dbReference>
<dbReference type="Reactome" id="R-MMU-5620971">
    <property type="pathway name" value="Pyroptosis"/>
</dbReference>
<dbReference type="Reactome" id="R-MMU-6804114">
    <property type="pathway name" value="TP53 Regulates Transcription of Genes Involved in G2 Cell Cycle Arrest"/>
</dbReference>
<dbReference type="BioGRID-ORCS" id="12028">
    <property type="hits" value="3 hits in 79 CRISPR screens"/>
</dbReference>
<dbReference type="ChiTaRS" id="Bax">
    <property type="organism name" value="mouse"/>
</dbReference>
<dbReference type="PRO" id="PR:Q07813"/>
<dbReference type="Proteomes" id="UP000000589">
    <property type="component" value="Chromosome 7"/>
</dbReference>
<dbReference type="RNAct" id="Q07813">
    <property type="molecule type" value="protein"/>
</dbReference>
<dbReference type="Bgee" id="ENSMUSG00000003873">
    <property type="expression patterns" value="Expressed in epiblast cell in embryo and 262 other cell types or tissues"/>
</dbReference>
<dbReference type="ExpressionAtlas" id="Q07813">
    <property type="expression patterns" value="baseline and differential"/>
</dbReference>
<dbReference type="GO" id="GO:0097145">
    <property type="term" value="C:BAK complex"/>
    <property type="evidence" value="ECO:0007669"/>
    <property type="project" value="Ensembl"/>
</dbReference>
<dbReference type="GO" id="GO:0097144">
    <property type="term" value="C:BAX complex"/>
    <property type="evidence" value="ECO:0000353"/>
    <property type="project" value="BHF-UCL"/>
</dbReference>
<dbReference type="GO" id="GO:0097136">
    <property type="term" value="C:Bcl-2 family protein complex"/>
    <property type="evidence" value="ECO:0000250"/>
    <property type="project" value="UniProtKB"/>
</dbReference>
<dbReference type="GO" id="GO:0071944">
    <property type="term" value="C:cell periphery"/>
    <property type="evidence" value="ECO:0007669"/>
    <property type="project" value="Ensembl"/>
</dbReference>
<dbReference type="GO" id="GO:0005737">
    <property type="term" value="C:cytoplasm"/>
    <property type="evidence" value="ECO:0000314"/>
    <property type="project" value="ParkinsonsUK-UCL"/>
</dbReference>
<dbReference type="GO" id="GO:0005829">
    <property type="term" value="C:cytosol"/>
    <property type="evidence" value="ECO:0000314"/>
    <property type="project" value="MGI"/>
</dbReference>
<dbReference type="GO" id="GO:0005783">
    <property type="term" value="C:endoplasmic reticulum"/>
    <property type="evidence" value="ECO:0000314"/>
    <property type="project" value="MGI"/>
</dbReference>
<dbReference type="GO" id="GO:0005789">
    <property type="term" value="C:endoplasmic reticulum membrane"/>
    <property type="evidence" value="ECO:0000250"/>
    <property type="project" value="UniProtKB"/>
</dbReference>
<dbReference type="GO" id="GO:0016020">
    <property type="term" value="C:membrane"/>
    <property type="evidence" value="ECO:0000250"/>
    <property type="project" value="MGI"/>
</dbReference>
<dbReference type="GO" id="GO:0031966">
    <property type="term" value="C:mitochondrial membrane"/>
    <property type="evidence" value="ECO:0000314"/>
    <property type="project" value="MGI"/>
</dbReference>
<dbReference type="GO" id="GO:0005741">
    <property type="term" value="C:mitochondrial outer membrane"/>
    <property type="evidence" value="ECO:0000314"/>
    <property type="project" value="MGI"/>
</dbReference>
<dbReference type="GO" id="GO:0005757">
    <property type="term" value="C:mitochondrial permeability transition pore complex"/>
    <property type="evidence" value="ECO:0000250"/>
    <property type="project" value="UniProtKB"/>
</dbReference>
<dbReference type="GO" id="GO:0005739">
    <property type="term" value="C:mitochondrion"/>
    <property type="evidence" value="ECO:0000314"/>
    <property type="project" value="ParkinsonsUK-UCL"/>
</dbReference>
<dbReference type="GO" id="GO:0005635">
    <property type="term" value="C:nuclear envelope"/>
    <property type="evidence" value="ECO:0007669"/>
    <property type="project" value="Ensembl"/>
</dbReference>
<dbReference type="GO" id="GO:0005634">
    <property type="term" value="C:nucleus"/>
    <property type="evidence" value="ECO:0000250"/>
    <property type="project" value="UniProtKB"/>
</dbReference>
<dbReference type="GO" id="GO:0046930">
    <property type="term" value="C:pore complex"/>
    <property type="evidence" value="ECO:0000250"/>
    <property type="project" value="UniProtKB"/>
</dbReference>
<dbReference type="GO" id="GO:0051434">
    <property type="term" value="F:BH3 domain binding"/>
    <property type="evidence" value="ECO:0007669"/>
    <property type="project" value="Ensembl"/>
</dbReference>
<dbReference type="GO" id="GO:0015267">
    <property type="term" value="F:channel activity"/>
    <property type="evidence" value="ECO:0000250"/>
    <property type="project" value="UniProtKB"/>
</dbReference>
<dbReference type="GO" id="GO:0030544">
    <property type="term" value="F:Hsp70 protein binding"/>
    <property type="evidence" value="ECO:0000314"/>
    <property type="project" value="ParkinsonsUK-UCL"/>
</dbReference>
<dbReference type="GO" id="GO:0042802">
    <property type="term" value="F:identical protein binding"/>
    <property type="evidence" value="ECO:0000353"/>
    <property type="project" value="IntAct"/>
</dbReference>
<dbReference type="GO" id="GO:0008289">
    <property type="term" value="F:lipid binding"/>
    <property type="evidence" value="ECO:0000250"/>
    <property type="project" value="UniProtKB"/>
</dbReference>
<dbReference type="GO" id="GO:0046982">
    <property type="term" value="F:protein heterodimerization activity"/>
    <property type="evidence" value="ECO:0007669"/>
    <property type="project" value="Ensembl"/>
</dbReference>
<dbReference type="GO" id="GO:0042803">
    <property type="term" value="F:protein homodimerization activity"/>
    <property type="evidence" value="ECO:0007669"/>
    <property type="project" value="Ensembl"/>
</dbReference>
<dbReference type="GO" id="GO:0051087">
    <property type="term" value="F:protein-folding chaperone binding"/>
    <property type="evidence" value="ECO:0000353"/>
    <property type="project" value="ParkinsonsUK-UCL"/>
</dbReference>
<dbReference type="GO" id="GO:0008637">
    <property type="term" value="P:apoptotic mitochondrial changes"/>
    <property type="evidence" value="ECO:0000314"/>
    <property type="project" value="MGI"/>
</dbReference>
<dbReference type="GO" id="GO:0006915">
    <property type="term" value="P:apoptotic process"/>
    <property type="evidence" value="ECO:0000314"/>
    <property type="project" value="MGI"/>
</dbReference>
<dbReference type="GO" id="GO:1902262">
    <property type="term" value="P:apoptotic process involved in blood vessel morphogenesis"/>
    <property type="evidence" value="ECO:0000316"/>
    <property type="project" value="MGI"/>
</dbReference>
<dbReference type="GO" id="GO:1902263">
    <property type="term" value="P:apoptotic process involved in embryonic digit morphogenesis"/>
    <property type="evidence" value="ECO:0000316"/>
    <property type="project" value="MGI"/>
</dbReference>
<dbReference type="GO" id="GO:0060057">
    <property type="term" value="P:apoptotic process involved in mammary gland involution"/>
    <property type="evidence" value="ECO:0000315"/>
    <property type="project" value="MGI"/>
</dbReference>
<dbReference type="GO" id="GO:0097190">
    <property type="term" value="P:apoptotic signaling pathway"/>
    <property type="evidence" value="ECO:0000315"/>
    <property type="project" value="MGI"/>
</dbReference>
<dbReference type="GO" id="GO:0001783">
    <property type="term" value="P:B cell apoptotic process"/>
    <property type="evidence" value="ECO:0000316"/>
    <property type="project" value="MGI"/>
</dbReference>
<dbReference type="GO" id="GO:0001782">
    <property type="term" value="P:B cell homeostasis"/>
    <property type="evidence" value="ECO:0000315"/>
    <property type="project" value="MGI"/>
</dbReference>
<dbReference type="GO" id="GO:0002358">
    <property type="term" value="P:B cell homeostatic proliferation"/>
    <property type="evidence" value="ECO:0000315"/>
    <property type="project" value="MGI"/>
</dbReference>
<dbReference type="GO" id="GO:0002352">
    <property type="term" value="P:B cell negative selection"/>
    <property type="evidence" value="ECO:0000316"/>
    <property type="project" value="MGI"/>
</dbReference>
<dbReference type="GO" id="GO:1990117">
    <property type="term" value="P:B cell receptor apoptotic signaling pathway"/>
    <property type="evidence" value="ECO:0007669"/>
    <property type="project" value="Ensembl"/>
</dbReference>
<dbReference type="GO" id="GO:0001974">
    <property type="term" value="P:blood vessel remodeling"/>
    <property type="evidence" value="ECO:0000316"/>
    <property type="project" value="MGI"/>
</dbReference>
<dbReference type="GO" id="GO:0060402">
    <property type="term" value="P:calcium ion transport into cytosol"/>
    <property type="evidence" value="ECO:0000316"/>
    <property type="project" value="MGI"/>
</dbReference>
<dbReference type="GO" id="GO:0008283">
    <property type="term" value="P:cell population proliferation"/>
    <property type="evidence" value="ECO:0000316"/>
    <property type="project" value="MGI"/>
</dbReference>
<dbReference type="GO" id="GO:0034644">
    <property type="term" value="P:cellular response to UV"/>
    <property type="evidence" value="ECO:0000316"/>
    <property type="project" value="MGI"/>
</dbReference>
<dbReference type="GO" id="GO:0098586">
    <property type="term" value="P:cellular response to virus"/>
    <property type="evidence" value="ECO:0007669"/>
    <property type="project" value="Ensembl"/>
</dbReference>
<dbReference type="GO" id="GO:0021987">
    <property type="term" value="P:cerebral cortex development"/>
    <property type="evidence" value="ECO:0000315"/>
    <property type="project" value="MGI"/>
</dbReference>
<dbReference type="GO" id="GO:0045136">
    <property type="term" value="P:development of secondary sexual characteristics"/>
    <property type="evidence" value="ECO:0000315"/>
    <property type="project" value="MGI"/>
</dbReference>
<dbReference type="GO" id="GO:0006974">
    <property type="term" value="P:DNA damage response"/>
    <property type="evidence" value="ECO:0000315"/>
    <property type="project" value="MGI"/>
</dbReference>
<dbReference type="GO" id="GO:0035234">
    <property type="term" value="P:ectopic germ cell programmed cell death"/>
    <property type="evidence" value="ECO:0000315"/>
    <property type="project" value="MGI"/>
</dbReference>
<dbReference type="GO" id="GO:1904019">
    <property type="term" value="P:epithelial cell apoptotic process"/>
    <property type="evidence" value="ECO:0000315"/>
    <property type="project" value="MGI"/>
</dbReference>
<dbReference type="GO" id="GO:0050673">
    <property type="term" value="P:epithelial cell proliferation"/>
    <property type="evidence" value="ECO:0000314"/>
    <property type="project" value="MGI"/>
</dbReference>
<dbReference type="GO" id="GO:0051649">
    <property type="term" value="P:establishment of localization in cell"/>
    <property type="evidence" value="ECO:0000315"/>
    <property type="project" value="MGI"/>
</dbReference>
<dbReference type="GO" id="GO:0010248">
    <property type="term" value="P:establishment or maintenance of transmembrane electrochemical gradient"/>
    <property type="evidence" value="ECO:0000250"/>
    <property type="project" value="UniProtKB"/>
</dbReference>
<dbReference type="GO" id="GO:0097194">
    <property type="term" value="P:execution phase of apoptosis"/>
    <property type="evidence" value="ECO:0007669"/>
    <property type="project" value="Ensembl"/>
</dbReference>
<dbReference type="GO" id="GO:0097192">
    <property type="term" value="P:extrinsic apoptotic signaling pathway in absence of ligand"/>
    <property type="evidence" value="ECO:0000316"/>
    <property type="project" value="MGI"/>
</dbReference>
<dbReference type="GO" id="GO:0008625">
    <property type="term" value="P:extrinsic apoptotic signaling pathway via death domain receptors"/>
    <property type="evidence" value="ECO:0000314"/>
    <property type="project" value="MGI"/>
</dbReference>
<dbReference type="GO" id="GO:0009566">
    <property type="term" value="P:fertilization"/>
    <property type="evidence" value="ECO:0000316"/>
    <property type="project" value="MGI"/>
</dbReference>
<dbReference type="GO" id="GO:0007281">
    <property type="term" value="P:germ cell development"/>
    <property type="evidence" value="ECO:0000316"/>
    <property type="project" value="MGI"/>
</dbReference>
<dbReference type="GO" id="GO:0006687">
    <property type="term" value="P:glycosphingolipid metabolic process"/>
    <property type="evidence" value="ECO:0000315"/>
    <property type="project" value="MGI"/>
</dbReference>
<dbReference type="GO" id="GO:0048872">
    <property type="term" value="P:homeostasis of number of cells"/>
    <property type="evidence" value="ECO:0000315"/>
    <property type="project" value="MGI"/>
</dbReference>
<dbReference type="GO" id="GO:0048873">
    <property type="term" value="P:homeostasis of number of cells within a tissue"/>
    <property type="evidence" value="ECO:0000315"/>
    <property type="project" value="MGI"/>
</dbReference>
<dbReference type="GO" id="GO:0021854">
    <property type="term" value="P:hypothalamus development"/>
    <property type="evidence" value="ECO:0000315"/>
    <property type="project" value="MGI"/>
</dbReference>
<dbReference type="GO" id="GO:0097193">
    <property type="term" value="P:intrinsic apoptotic signaling pathway"/>
    <property type="evidence" value="ECO:0000315"/>
    <property type="project" value="MGI"/>
</dbReference>
<dbReference type="GO" id="GO:0072332">
    <property type="term" value="P:intrinsic apoptotic signaling pathway by p53 class mediator"/>
    <property type="evidence" value="ECO:0000315"/>
    <property type="project" value="MGI"/>
</dbReference>
<dbReference type="GO" id="GO:0008630">
    <property type="term" value="P:intrinsic apoptotic signaling pathway in response to DNA damage"/>
    <property type="evidence" value="ECO:0000315"/>
    <property type="project" value="MGI"/>
</dbReference>
<dbReference type="GO" id="GO:0070059">
    <property type="term" value="P:intrinsic apoptotic signaling pathway in response to endoplasmic reticulum stress"/>
    <property type="evidence" value="ECO:0000316"/>
    <property type="project" value="MGI"/>
</dbReference>
<dbReference type="GO" id="GO:0001822">
    <property type="term" value="P:kidney development"/>
    <property type="evidence" value="ECO:0000316"/>
    <property type="project" value="MGI"/>
</dbReference>
<dbReference type="GO" id="GO:0001776">
    <property type="term" value="P:leukocyte homeostasis"/>
    <property type="evidence" value="ECO:0000316"/>
    <property type="project" value="MGI"/>
</dbReference>
<dbReference type="GO" id="GO:0035108">
    <property type="term" value="P:limb morphogenesis"/>
    <property type="evidence" value="ECO:0000316"/>
    <property type="project" value="MGI"/>
</dbReference>
<dbReference type="GO" id="GO:0008584">
    <property type="term" value="P:male gonad development"/>
    <property type="evidence" value="ECO:0000315"/>
    <property type="project" value="MGI"/>
</dbReference>
<dbReference type="GO" id="GO:0043653">
    <property type="term" value="P:mitochondrial fragmentation involved in apoptotic process"/>
    <property type="evidence" value="ECO:0000250"/>
    <property type="project" value="UniProtKB"/>
</dbReference>
<dbReference type="GO" id="GO:0008053">
    <property type="term" value="P:mitochondrial fusion"/>
    <property type="evidence" value="ECO:0000316"/>
    <property type="project" value="MGI"/>
</dbReference>
<dbReference type="GO" id="GO:0007005">
    <property type="term" value="P:mitochondrion organization"/>
    <property type="evidence" value="ECO:0000316"/>
    <property type="project" value="MGI"/>
</dbReference>
<dbReference type="GO" id="GO:0097049">
    <property type="term" value="P:motor neuron apoptotic process"/>
    <property type="evidence" value="ECO:0000315"/>
    <property type="project" value="MGI"/>
</dbReference>
<dbReference type="GO" id="GO:0002262">
    <property type="term" value="P:myeloid cell homeostasis"/>
    <property type="evidence" value="ECO:0000316"/>
    <property type="project" value="MGI"/>
</dbReference>
<dbReference type="GO" id="GO:2001234">
    <property type="term" value="P:negative regulation of apoptotic signaling pathway"/>
    <property type="evidence" value="ECO:0000316"/>
    <property type="project" value="MGI"/>
</dbReference>
<dbReference type="GO" id="GO:0008285">
    <property type="term" value="P:negative regulation of cell population proliferation"/>
    <property type="evidence" value="ECO:0000315"/>
    <property type="project" value="MGI"/>
</dbReference>
<dbReference type="GO" id="GO:0032471">
    <property type="term" value="P:negative regulation of endoplasmic reticulum calcium ion concentration"/>
    <property type="evidence" value="ECO:0000316"/>
    <property type="project" value="MGI"/>
</dbReference>
<dbReference type="GO" id="GO:0048147">
    <property type="term" value="P:negative regulation of fibroblast proliferation"/>
    <property type="evidence" value="ECO:0000315"/>
    <property type="project" value="MGI"/>
</dbReference>
<dbReference type="GO" id="GO:0010917">
    <property type="term" value="P:negative regulation of mitochondrial membrane potential"/>
    <property type="evidence" value="ECO:0000250"/>
    <property type="project" value="UniProtKB"/>
</dbReference>
<dbReference type="GO" id="GO:0043524">
    <property type="term" value="P:negative regulation of neuron apoptotic process"/>
    <property type="evidence" value="ECO:0000314"/>
    <property type="project" value="MGI"/>
</dbReference>
<dbReference type="GO" id="GO:0007399">
    <property type="term" value="P:nervous system development"/>
    <property type="evidence" value="ECO:0000315"/>
    <property type="project" value="MGI"/>
</dbReference>
<dbReference type="GO" id="GO:0051402">
    <property type="term" value="P:neuron apoptotic process"/>
    <property type="evidence" value="ECO:0000314"/>
    <property type="project" value="MGI"/>
</dbReference>
<dbReference type="GO" id="GO:0001764">
    <property type="term" value="P:neuron migration"/>
    <property type="evidence" value="ECO:0000315"/>
    <property type="project" value="MGI"/>
</dbReference>
<dbReference type="GO" id="GO:0042475">
    <property type="term" value="P:odontogenesis of dentin-containing tooth"/>
    <property type="evidence" value="ECO:0000316"/>
    <property type="project" value="MGI"/>
</dbReference>
<dbReference type="GO" id="GO:0001541">
    <property type="term" value="P:ovarian follicle development"/>
    <property type="evidence" value="ECO:0000315"/>
    <property type="project" value="MGI"/>
</dbReference>
<dbReference type="GO" id="GO:1902512">
    <property type="term" value="P:positive regulation of apoptotic DNA fragmentation"/>
    <property type="evidence" value="ECO:0007669"/>
    <property type="project" value="Ensembl"/>
</dbReference>
<dbReference type="GO" id="GO:0043065">
    <property type="term" value="P:positive regulation of apoptotic process"/>
    <property type="evidence" value="ECO:0000314"/>
    <property type="project" value="UniProtKB"/>
</dbReference>
<dbReference type="GO" id="GO:0060058">
    <property type="term" value="P:positive regulation of apoptotic process involved in mammary gland involution"/>
    <property type="evidence" value="ECO:0000315"/>
    <property type="project" value="MGI"/>
</dbReference>
<dbReference type="GO" id="GO:0002904">
    <property type="term" value="P:positive regulation of B cell apoptotic process"/>
    <property type="evidence" value="ECO:0000316"/>
    <property type="project" value="MGI"/>
</dbReference>
<dbReference type="GO" id="GO:0010524">
    <property type="term" value="P:positive regulation of calcium ion transport into cytosol"/>
    <property type="evidence" value="ECO:0000316"/>
    <property type="project" value="MGI"/>
</dbReference>
<dbReference type="GO" id="GO:0048087">
    <property type="term" value="P:positive regulation of developmental pigmentation"/>
    <property type="evidence" value="ECO:0000316"/>
    <property type="project" value="MGI"/>
</dbReference>
<dbReference type="GO" id="GO:0051094">
    <property type="term" value="P:positive regulation of developmental process"/>
    <property type="evidence" value="ECO:0000315"/>
    <property type="project" value="MGI"/>
</dbReference>
<dbReference type="GO" id="GO:1904037">
    <property type="term" value="P:positive regulation of epithelial cell apoptotic process"/>
    <property type="evidence" value="ECO:0000315"/>
    <property type="project" value="MGI"/>
</dbReference>
<dbReference type="GO" id="GO:2001241">
    <property type="term" value="P:positive regulation of extrinsic apoptotic signaling pathway in absence of ligand"/>
    <property type="evidence" value="ECO:0000314"/>
    <property type="project" value="MGI"/>
</dbReference>
<dbReference type="GO" id="GO:2001244">
    <property type="term" value="P:positive regulation of intrinsic apoptotic signaling pathway"/>
    <property type="evidence" value="ECO:0000315"/>
    <property type="project" value="MGI"/>
</dbReference>
<dbReference type="GO" id="GO:1902110">
    <property type="term" value="P:positive regulation of mitochondrial membrane permeability involved in apoptotic process"/>
    <property type="evidence" value="ECO:0000316"/>
    <property type="project" value="MGI"/>
</dbReference>
<dbReference type="GO" id="GO:2000673">
    <property type="term" value="P:positive regulation of motor neuron apoptotic process"/>
    <property type="evidence" value="ECO:0000315"/>
    <property type="project" value="MGI"/>
</dbReference>
<dbReference type="GO" id="GO:0043525">
    <property type="term" value="P:positive regulation of neuron apoptotic process"/>
    <property type="evidence" value="ECO:0000315"/>
    <property type="project" value="UniProtKB"/>
</dbReference>
<dbReference type="GO" id="GO:0031334">
    <property type="term" value="P:positive regulation of protein-containing complex assembly"/>
    <property type="evidence" value="ECO:0000250"/>
    <property type="project" value="UniProtKB"/>
</dbReference>
<dbReference type="GO" id="GO:0090200">
    <property type="term" value="P:positive regulation of release of cytochrome c from mitochondria"/>
    <property type="evidence" value="ECO:0000250"/>
    <property type="project" value="UniProtKB"/>
</dbReference>
<dbReference type="GO" id="GO:0051281">
    <property type="term" value="P:positive regulation of release of sequestered calcium ion into cytosol"/>
    <property type="evidence" value="ECO:0000315"/>
    <property type="project" value="MGI"/>
</dbReference>
<dbReference type="GO" id="GO:2000243">
    <property type="term" value="P:positive regulation of reproductive process"/>
    <property type="evidence" value="ECO:0000315"/>
    <property type="project" value="MGI"/>
</dbReference>
<dbReference type="GO" id="GO:0048597">
    <property type="term" value="P:post-embryonic camera-type eye morphogenesis"/>
    <property type="evidence" value="ECO:0000316"/>
    <property type="project" value="MGI"/>
</dbReference>
<dbReference type="GO" id="GO:0009791">
    <property type="term" value="P:post-embryonic development"/>
    <property type="evidence" value="ECO:0000316"/>
    <property type="project" value="MGI"/>
</dbReference>
<dbReference type="GO" id="GO:0051204">
    <property type="term" value="P:protein insertion into mitochondrial membrane"/>
    <property type="evidence" value="ECO:0000315"/>
    <property type="project" value="MGI"/>
</dbReference>
<dbReference type="GO" id="GO:0042981">
    <property type="term" value="P:regulation of apoptotic process"/>
    <property type="evidence" value="ECO:0000315"/>
    <property type="project" value="UniProtKB"/>
</dbReference>
<dbReference type="GO" id="GO:0051726">
    <property type="term" value="P:regulation of cell cycle"/>
    <property type="evidence" value="ECO:0000316"/>
    <property type="project" value="MGI"/>
</dbReference>
<dbReference type="GO" id="GO:0033599">
    <property type="term" value="P:regulation of mammary gland epithelial cell proliferation"/>
    <property type="evidence" value="ECO:0000315"/>
    <property type="project" value="MGI"/>
</dbReference>
<dbReference type="GO" id="GO:1902108">
    <property type="term" value="P:regulation of mitochondrial membrane permeability involved in apoptotic process"/>
    <property type="evidence" value="ECO:0000316"/>
    <property type="project" value="MGI"/>
</dbReference>
<dbReference type="GO" id="GO:1902445">
    <property type="term" value="P:regulation of mitochondrial membrane permeability involved in programmed necrotic cell death"/>
    <property type="evidence" value="ECO:0000315"/>
    <property type="project" value="MGI"/>
</dbReference>
<dbReference type="GO" id="GO:0043523">
    <property type="term" value="P:regulation of neuron apoptotic process"/>
    <property type="evidence" value="ECO:0000315"/>
    <property type="project" value="MGI"/>
</dbReference>
<dbReference type="GO" id="GO:0006808">
    <property type="term" value="P:regulation of nitrogen utilization"/>
    <property type="evidence" value="ECO:0000316"/>
    <property type="project" value="MGI"/>
</dbReference>
<dbReference type="GO" id="GO:0001836">
    <property type="term" value="P:release of cytochrome c from mitochondria"/>
    <property type="evidence" value="ECO:0000314"/>
    <property type="project" value="MGI"/>
</dbReference>
<dbReference type="GO" id="GO:0032976">
    <property type="term" value="P:release of matrix enzymes from mitochondria"/>
    <property type="evidence" value="ECO:0000250"/>
    <property type="project" value="UniProtKB"/>
</dbReference>
<dbReference type="GO" id="GO:0051209">
    <property type="term" value="P:release of sequestered calcium ion into cytosol"/>
    <property type="evidence" value="ECO:0000315"/>
    <property type="project" value="MGI"/>
</dbReference>
<dbReference type="GO" id="GO:0048678">
    <property type="term" value="P:response to axon injury"/>
    <property type="evidence" value="ECO:0000315"/>
    <property type="project" value="MGI"/>
</dbReference>
<dbReference type="GO" id="GO:0010332">
    <property type="term" value="P:response to gamma radiation"/>
    <property type="evidence" value="ECO:0000315"/>
    <property type="project" value="MGI"/>
</dbReference>
<dbReference type="GO" id="GO:0010212">
    <property type="term" value="P:response to ionizing radiation"/>
    <property type="evidence" value="ECO:0000315"/>
    <property type="project" value="MGI"/>
</dbReference>
<dbReference type="GO" id="GO:0009651">
    <property type="term" value="P:response to salt stress"/>
    <property type="evidence" value="ECO:0000316"/>
    <property type="project" value="MGI"/>
</dbReference>
<dbReference type="GO" id="GO:0009636">
    <property type="term" value="P:response to toxic substance"/>
    <property type="evidence" value="ECO:0000315"/>
    <property type="project" value="MGI"/>
</dbReference>
<dbReference type="GO" id="GO:0009611">
    <property type="term" value="P:response to wounding"/>
    <property type="evidence" value="ECO:0000315"/>
    <property type="project" value="MGI"/>
</dbReference>
<dbReference type="GO" id="GO:0060041">
    <property type="term" value="P:retina development in camera-type eye"/>
    <property type="evidence" value="ECO:0000315"/>
    <property type="project" value="MGI"/>
</dbReference>
<dbReference type="GO" id="GO:0046666">
    <property type="term" value="P:retinal cell programmed cell death"/>
    <property type="evidence" value="ECO:0000315"/>
    <property type="project" value="MGI"/>
</dbReference>
<dbReference type="GO" id="GO:0060011">
    <property type="term" value="P:Sertoli cell proliferation"/>
    <property type="evidence" value="ECO:0000316"/>
    <property type="project" value="MGI"/>
</dbReference>
<dbReference type="GO" id="GO:0007548">
    <property type="term" value="P:sex differentiation"/>
    <property type="evidence" value="ECO:0000315"/>
    <property type="project" value="MGI"/>
</dbReference>
<dbReference type="GO" id="GO:0048515">
    <property type="term" value="P:spermatid differentiation"/>
    <property type="evidence" value="ECO:0000315"/>
    <property type="project" value="MGI"/>
</dbReference>
<dbReference type="GO" id="GO:0007283">
    <property type="term" value="P:spermatogenesis"/>
    <property type="evidence" value="ECO:0000315"/>
    <property type="project" value="MGI"/>
</dbReference>
<dbReference type="GO" id="GO:0097435">
    <property type="term" value="P:supramolecular fiber organization"/>
    <property type="evidence" value="ECO:0007669"/>
    <property type="project" value="Ensembl"/>
</dbReference>
<dbReference type="GO" id="GO:0001777">
    <property type="term" value="P:T cell homeostatic proliferation"/>
    <property type="evidence" value="ECO:0000315"/>
    <property type="project" value="MGI"/>
</dbReference>
<dbReference type="GO" id="GO:0070242">
    <property type="term" value="P:thymocyte apoptotic process"/>
    <property type="evidence" value="ECO:0000316"/>
    <property type="project" value="MGI"/>
</dbReference>
<dbReference type="GO" id="GO:0060068">
    <property type="term" value="P:vagina development"/>
    <property type="evidence" value="ECO:0000316"/>
    <property type="project" value="MGI"/>
</dbReference>
<dbReference type="CDD" id="cd06845">
    <property type="entry name" value="Bcl-2_like"/>
    <property type="match status" value="1"/>
</dbReference>
<dbReference type="FunFam" id="1.10.437.10:FF:000004">
    <property type="entry name" value="apoptosis regulator BAX isoform X2"/>
    <property type="match status" value="1"/>
</dbReference>
<dbReference type="Gene3D" id="1.10.437.10">
    <property type="entry name" value="Blc2-like"/>
    <property type="match status" value="1"/>
</dbReference>
<dbReference type="InterPro" id="IPR036834">
    <property type="entry name" value="Bcl-2-like_sf"/>
</dbReference>
<dbReference type="InterPro" id="IPR046371">
    <property type="entry name" value="Bcl-2_BH1-3"/>
</dbReference>
<dbReference type="InterPro" id="IPR026298">
    <property type="entry name" value="Bcl-2_fam"/>
</dbReference>
<dbReference type="InterPro" id="IPR002475">
    <property type="entry name" value="Bcl2-like"/>
</dbReference>
<dbReference type="InterPro" id="IPR020717">
    <property type="entry name" value="Bcl2_BH1_motif_CS"/>
</dbReference>
<dbReference type="InterPro" id="IPR020726">
    <property type="entry name" value="Bcl2_BH2_motif_CS"/>
</dbReference>
<dbReference type="InterPro" id="IPR020728">
    <property type="entry name" value="Bcl2_BH3_motif_CS"/>
</dbReference>
<dbReference type="PANTHER" id="PTHR11256:SF42">
    <property type="entry name" value="APOPTOSIS REGULATOR BAX"/>
    <property type="match status" value="1"/>
</dbReference>
<dbReference type="PANTHER" id="PTHR11256">
    <property type="entry name" value="BCL-2 RELATED"/>
    <property type="match status" value="1"/>
</dbReference>
<dbReference type="Pfam" id="PF00452">
    <property type="entry name" value="Bcl-2"/>
    <property type="match status" value="1"/>
</dbReference>
<dbReference type="PRINTS" id="PR01862">
    <property type="entry name" value="BCL2FAMILY"/>
</dbReference>
<dbReference type="SMART" id="SM00337">
    <property type="entry name" value="BCL"/>
    <property type="match status" value="1"/>
</dbReference>
<dbReference type="SUPFAM" id="SSF56854">
    <property type="entry name" value="Bcl-2 inhibitors of programmed cell death"/>
    <property type="match status" value="1"/>
</dbReference>
<dbReference type="PROSITE" id="PS50062">
    <property type="entry name" value="BCL2_FAMILY"/>
    <property type="match status" value="1"/>
</dbReference>
<dbReference type="PROSITE" id="PS01080">
    <property type="entry name" value="BH1"/>
    <property type="match status" value="1"/>
</dbReference>
<dbReference type="PROSITE" id="PS01258">
    <property type="entry name" value="BH2"/>
    <property type="match status" value="1"/>
</dbReference>
<dbReference type="PROSITE" id="PS01259">
    <property type="entry name" value="BH3"/>
    <property type="match status" value="1"/>
</dbReference>
<evidence type="ECO:0000250" key="1"/>
<evidence type="ECO:0000250" key="2">
    <source>
        <dbReference type="UniProtKB" id="Q07812"/>
    </source>
</evidence>
<evidence type="ECO:0000255" key="3"/>
<evidence type="ECO:0000269" key="4">
    <source>
    </source>
</evidence>
<evidence type="ECO:0000269" key="5">
    <source>
    </source>
</evidence>
<evidence type="ECO:0000269" key="6">
    <source>
    </source>
</evidence>
<evidence type="ECO:0000269" key="7">
    <source>
    </source>
</evidence>
<evidence type="ECO:0000269" key="8">
    <source>
    </source>
</evidence>
<evidence type="ECO:0000305" key="9"/>
<evidence type="ECO:0007829" key="10">
    <source>
        <dbReference type="PDB" id="5W62"/>
    </source>
</evidence>
<feature type="chain" id="PRO_0000143057" description="Apoptosis regulator BAX">
    <location>
        <begin position="1"/>
        <end position="192"/>
    </location>
</feature>
<feature type="transmembrane region" description="Helical" evidence="3">
    <location>
        <begin position="172"/>
        <end position="192"/>
    </location>
</feature>
<feature type="short sequence motif" description="BH3">
    <location>
        <begin position="59"/>
        <end position="73"/>
    </location>
</feature>
<feature type="short sequence motif" description="BH1">
    <location>
        <begin position="98"/>
        <end position="118"/>
    </location>
</feature>
<feature type="short sequence motif" description="BH2">
    <location>
        <begin position="150"/>
        <end position="165"/>
    </location>
</feature>
<feature type="modified residue" description="N-acetylmethionine" evidence="2">
    <location>
        <position position="1"/>
    </location>
</feature>
<feature type="cross-link" description="Glycyl lysine isopeptide (Lys-Gly) (interchain with G-Cter in ubiquitin)" evidence="2">
    <location>
        <position position="128"/>
    </location>
</feature>
<feature type="cross-link" description="Glycyl lysine isopeptide (Lys-Gly) (interchain with G-Cter in ubiquitin)" evidence="2">
    <location>
        <position position="190"/>
    </location>
</feature>
<feature type="helix" evidence="10">
    <location>
        <begin position="16"/>
        <end position="34"/>
    </location>
</feature>
<feature type="helix" evidence="10">
    <location>
        <begin position="54"/>
        <end position="70"/>
    </location>
</feature>
<feature type="helix" evidence="10">
    <location>
        <begin position="74"/>
        <end position="81"/>
    </location>
</feature>
<feature type="helix" evidence="10">
    <location>
        <begin position="88"/>
        <end position="99"/>
    </location>
</feature>
<feature type="turn" evidence="10">
    <location>
        <begin position="100"/>
        <end position="102"/>
    </location>
</feature>
<feature type="helix" evidence="10">
    <location>
        <begin position="107"/>
        <end position="124"/>
    </location>
</feature>
<feature type="helix" evidence="10">
    <location>
        <begin position="131"/>
        <end position="147"/>
    </location>
</feature>
<feature type="helix" evidence="10">
    <location>
        <begin position="149"/>
        <end position="154"/>
    </location>
</feature>
<feature type="turn" evidence="10">
    <location>
        <begin position="155"/>
        <end position="158"/>
    </location>
</feature>
<feature type="helix" evidence="10">
    <location>
        <begin position="159"/>
        <end position="165"/>
    </location>
</feature>
<feature type="helix" evidence="10">
    <location>
        <begin position="170"/>
        <end position="172"/>
    </location>
</feature>
<feature type="helix" evidence="10">
    <location>
        <begin position="173"/>
        <end position="188"/>
    </location>
</feature>
<proteinExistence type="evidence at protein level"/>
<gene>
    <name type="primary">Bax</name>
</gene>